<organism>
    <name type="scientific">Mycoplasma mobile (strain ATCC 43663 / 163K / NCTC 11711)</name>
    <name type="common">Mesomycoplasma mobile</name>
    <dbReference type="NCBI Taxonomy" id="267748"/>
    <lineage>
        <taxon>Bacteria</taxon>
        <taxon>Bacillati</taxon>
        <taxon>Mycoplasmatota</taxon>
        <taxon>Mycoplasmoidales</taxon>
        <taxon>Metamycoplasmataceae</taxon>
        <taxon>Mesomycoplasma</taxon>
    </lineage>
</organism>
<reference key="1">
    <citation type="journal article" date="2004" name="Genome Res.">
        <title>The complete genome and proteome of Mycoplasma mobile.</title>
        <authorList>
            <person name="Jaffe J.D."/>
            <person name="Stange-Thomann N."/>
            <person name="Smith C."/>
            <person name="DeCaprio D."/>
            <person name="Fisher S."/>
            <person name="Butler J."/>
            <person name="Calvo S."/>
            <person name="Elkins T."/>
            <person name="FitzGerald M.G."/>
            <person name="Hafez N."/>
            <person name="Kodira C.D."/>
            <person name="Major J."/>
            <person name="Wang S."/>
            <person name="Wilkinson J."/>
            <person name="Nicol R."/>
            <person name="Nusbaum C."/>
            <person name="Birren B."/>
            <person name="Berg H.C."/>
            <person name="Church G.M."/>
        </authorList>
    </citation>
    <scope>NUCLEOTIDE SEQUENCE [LARGE SCALE GENOMIC DNA]</scope>
    <source>
        <strain>ATCC 43663 / NCTC 11711 / 163 K</strain>
    </source>
</reference>
<evidence type="ECO:0000255" key="1">
    <source>
        <dbReference type="HAMAP-Rule" id="MF_01306"/>
    </source>
</evidence>
<evidence type="ECO:0000305" key="2"/>
<name>RS4_MYCM1</name>
<dbReference type="EMBL" id="AE017308">
    <property type="protein sequence ID" value="AAT27555.1"/>
    <property type="molecule type" value="Genomic_DNA"/>
</dbReference>
<dbReference type="RefSeq" id="WP_011264589.1">
    <property type="nucleotide sequence ID" value="NC_006908.1"/>
</dbReference>
<dbReference type="SMR" id="Q6KIM1"/>
<dbReference type="STRING" id="267748.MMOB0690"/>
<dbReference type="KEGG" id="mmo:MMOB0690"/>
<dbReference type="eggNOG" id="COG0522">
    <property type="taxonomic scope" value="Bacteria"/>
</dbReference>
<dbReference type="HOGENOM" id="CLU_092403_0_1_14"/>
<dbReference type="OrthoDB" id="9803672at2"/>
<dbReference type="Proteomes" id="UP000009072">
    <property type="component" value="Chromosome"/>
</dbReference>
<dbReference type="GO" id="GO:0015935">
    <property type="term" value="C:small ribosomal subunit"/>
    <property type="evidence" value="ECO:0007669"/>
    <property type="project" value="InterPro"/>
</dbReference>
<dbReference type="GO" id="GO:0019843">
    <property type="term" value="F:rRNA binding"/>
    <property type="evidence" value="ECO:0007669"/>
    <property type="project" value="UniProtKB-UniRule"/>
</dbReference>
<dbReference type="GO" id="GO:0003735">
    <property type="term" value="F:structural constituent of ribosome"/>
    <property type="evidence" value="ECO:0007669"/>
    <property type="project" value="InterPro"/>
</dbReference>
<dbReference type="GO" id="GO:0042274">
    <property type="term" value="P:ribosomal small subunit biogenesis"/>
    <property type="evidence" value="ECO:0007669"/>
    <property type="project" value="TreeGrafter"/>
</dbReference>
<dbReference type="GO" id="GO:0006412">
    <property type="term" value="P:translation"/>
    <property type="evidence" value="ECO:0007669"/>
    <property type="project" value="UniProtKB-UniRule"/>
</dbReference>
<dbReference type="CDD" id="cd00165">
    <property type="entry name" value="S4"/>
    <property type="match status" value="1"/>
</dbReference>
<dbReference type="FunFam" id="3.10.290.10:FF:000001">
    <property type="entry name" value="30S ribosomal protein S4"/>
    <property type="match status" value="1"/>
</dbReference>
<dbReference type="Gene3D" id="1.10.1050.10">
    <property type="entry name" value="Ribosomal Protein S4 Delta 41, Chain A, domain 1"/>
    <property type="match status" value="1"/>
</dbReference>
<dbReference type="Gene3D" id="3.10.290.10">
    <property type="entry name" value="RNA-binding S4 domain"/>
    <property type="match status" value="1"/>
</dbReference>
<dbReference type="HAMAP" id="MF_01306_B">
    <property type="entry name" value="Ribosomal_uS4_B"/>
    <property type="match status" value="1"/>
</dbReference>
<dbReference type="InterPro" id="IPR022801">
    <property type="entry name" value="Ribosomal_uS4"/>
</dbReference>
<dbReference type="InterPro" id="IPR005709">
    <property type="entry name" value="Ribosomal_uS4_bac-type"/>
</dbReference>
<dbReference type="InterPro" id="IPR018079">
    <property type="entry name" value="Ribosomal_uS4_CS"/>
</dbReference>
<dbReference type="InterPro" id="IPR001912">
    <property type="entry name" value="Ribosomal_uS4_N"/>
</dbReference>
<dbReference type="InterPro" id="IPR002942">
    <property type="entry name" value="S4_RNA-bd"/>
</dbReference>
<dbReference type="InterPro" id="IPR036986">
    <property type="entry name" value="S4_RNA-bd_sf"/>
</dbReference>
<dbReference type="NCBIfam" id="NF003717">
    <property type="entry name" value="PRK05327.1"/>
    <property type="match status" value="1"/>
</dbReference>
<dbReference type="NCBIfam" id="TIGR01017">
    <property type="entry name" value="rpsD_bact"/>
    <property type="match status" value="1"/>
</dbReference>
<dbReference type="PANTHER" id="PTHR11831">
    <property type="entry name" value="30S 40S RIBOSOMAL PROTEIN"/>
    <property type="match status" value="1"/>
</dbReference>
<dbReference type="PANTHER" id="PTHR11831:SF4">
    <property type="entry name" value="SMALL RIBOSOMAL SUBUNIT PROTEIN US4M"/>
    <property type="match status" value="1"/>
</dbReference>
<dbReference type="Pfam" id="PF00163">
    <property type="entry name" value="Ribosomal_S4"/>
    <property type="match status" value="1"/>
</dbReference>
<dbReference type="Pfam" id="PF01479">
    <property type="entry name" value="S4"/>
    <property type="match status" value="1"/>
</dbReference>
<dbReference type="SMART" id="SM01390">
    <property type="entry name" value="Ribosomal_S4"/>
    <property type="match status" value="1"/>
</dbReference>
<dbReference type="SMART" id="SM00363">
    <property type="entry name" value="S4"/>
    <property type="match status" value="1"/>
</dbReference>
<dbReference type="SUPFAM" id="SSF55174">
    <property type="entry name" value="Alpha-L RNA-binding motif"/>
    <property type="match status" value="1"/>
</dbReference>
<dbReference type="PROSITE" id="PS00632">
    <property type="entry name" value="RIBOSOMAL_S4"/>
    <property type="match status" value="1"/>
</dbReference>
<dbReference type="PROSITE" id="PS50889">
    <property type="entry name" value="S4"/>
    <property type="match status" value="1"/>
</dbReference>
<feature type="chain" id="PRO_0000132415" description="Small ribosomal subunit protein uS4">
    <location>
        <begin position="1"/>
        <end position="199"/>
    </location>
</feature>
<feature type="domain" description="S4 RNA-binding" evidence="1">
    <location>
        <begin position="94"/>
        <end position="157"/>
    </location>
</feature>
<sequence length="199" mass="23034">MSRYVGPVFKRSRRFGFSILETGKEFVKGKQRQYAPGQHGQRRGKLSDFGIHQLEKQKVRFMYGINERQFRNTFAIANKAKGVTGTAFLQLLESRLDNIVYRMGFAQTRRQARQLVNHGHFLLNGKKADIPSQRINVGDTIELRAKSQNVPTILASIETRVVAPWIEKDKFKGKLIRVPERKELNQEINEALIVEFYNK</sequence>
<accession>Q6KIM1</accession>
<proteinExistence type="inferred from homology"/>
<keyword id="KW-1185">Reference proteome</keyword>
<keyword id="KW-0687">Ribonucleoprotein</keyword>
<keyword id="KW-0689">Ribosomal protein</keyword>
<keyword id="KW-0694">RNA-binding</keyword>
<keyword id="KW-0699">rRNA-binding</keyword>
<protein>
    <recommendedName>
        <fullName evidence="1">Small ribosomal subunit protein uS4</fullName>
    </recommendedName>
    <alternativeName>
        <fullName evidence="2">30S ribosomal protein S4</fullName>
    </alternativeName>
</protein>
<comment type="function">
    <text evidence="1">One of the primary rRNA binding proteins, it binds directly to 16S rRNA where it nucleates assembly of the body of the 30S subunit.</text>
</comment>
<comment type="function">
    <text evidence="1">With S5 and S12 plays an important role in translational accuracy.</text>
</comment>
<comment type="subunit">
    <text evidence="1">Part of the 30S ribosomal subunit. Contacts protein S5. The interaction surface between S4 and S5 is involved in control of translational fidelity.</text>
</comment>
<comment type="similarity">
    <text evidence="1">Belongs to the universal ribosomal protein uS4 family.</text>
</comment>
<gene>
    <name evidence="1" type="primary">rpsD</name>
    <name type="ordered locus">MMOB0690</name>
</gene>